<organism>
    <name type="scientific">Gymnema sylvestre</name>
    <name type="common">Gurmar</name>
    <name type="synonym">Periploca sylvestris</name>
    <dbReference type="NCBI Taxonomy" id="4068"/>
    <lineage>
        <taxon>Eukaryota</taxon>
        <taxon>Viridiplantae</taxon>
        <taxon>Streptophyta</taxon>
        <taxon>Embryophyta</taxon>
        <taxon>Tracheophyta</taxon>
        <taxon>Spermatophyta</taxon>
        <taxon>Magnoliopsida</taxon>
        <taxon>eudicotyledons</taxon>
        <taxon>Gunneridae</taxon>
        <taxon>Pentapetalae</taxon>
        <taxon>asterids</taxon>
        <taxon>lamiids</taxon>
        <taxon>Gentianales</taxon>
        <taxon>Apocynaceae</taxon>
        <taxon>Asclepiadoideae</taxon>
        <taxon>Marsdenieae</taxon>
        <taxon>Gymnema</taxon>
    </lineage>
</organism>
<sequence>MAKFAAIVLLILVASATVNAVKEHDELPTTGMSRKILLQPVFKSLIISIAEGQQCVKKDELCIPYYLDCCEPLECKKVNWWDHKCIG</sequence>
<reference evidence="17" key="1">
    <citation type="submission" date="2018-03" db="EMBL/GenBank/DDBJ databases">
        <title>Cloning and characterization of Gurmarin (sweet taste suppressor protein) from Gymnema sylvestre.</title>
        <authorList>
            <person name="Kapare V.M."/>
            <person name="Barvkar V.T."/>
            <person name="Malpathak N.P."/>
        </authorList>
    </citation>
    <scope>NUCLEOTIDE SEQUENCE [MRNA]</scope>
    <source>
        <tissue evidence="17">Leaf</tissue>
    </source>
</reference>
<reference key="2">
    <citation type="journal article" date="1992" name="J. Biochem.">
        <title>Amino acid sequence of sweet-taste-suppressing peptide (gurmarin) from the leaves of Gymnema sylvestre.</title>
        <authorList>
            <person name="Kamei K."/>
            <person name="Takano R."/>
            <person name="Miyasaka A."/>
            <person name="Imoto T."/>
            <person name="Hara S."/>
        </authorList>
    </citation>
    <scope>PROTEIN SEQUENCE OF 53-87</scope>
    <scope>TISSUE SPECIFICITY</scope>
    <scope>MASS SPECTROMETRY</scope>
    <scope>PYROGLUTAMATE FORMATION AT GLN-53</scope>
    <source>
        <tissue>Leaf</tissue>
    </source>
</reference>
<reference key="3">
    <citation type="journal article" date="1994" name="Arch. Histol. Cytol.">
        <title>Histological localization of the sweet taste receptor in rat taste buds by the use of gurmarin, a sweet taste-suppressing peptide.</title>
        <authorList>
            <person name="Yoshie S."/>
            <person name="Miyasaka A."/>
            <person name="Imoto T."/>
        </authorList>
    </citation>
    <scope>FUNCTION</scope>
</reference>
<reference key="4">
    <citation type="journal article" date="1995" name="Am. J. Physiol.">
        <title>Gurmarin inhibition of sweet taste responses in mice.</title>
        <authorList>
            <person name="Ninomiya Y."/>
            <person name="Imoto T."/>
        </authorList>
    </citation>
    <scope>FUNCTION</scope>
</reference>
<reference key="5">
    <citation type="journal article" date="1995" name="Biosci. Biotechnol. Biochem.">
        <title>Location of the disulfide bonds of the sweetness-suppressing polypeptide gurmarin.</title>
        <authorList>
            <person name="Ota M."/>
            <person name="Ariyoshi Y."/>
        </authorList>
    </citation>
    <scope>DISULFIDE BONDS</scope>
    <source>
        <tissue>Leaf</tissue>
    </source>
</reference>
<reference key="6">
    <citation type="journal article" date="1995" name="Brain Res.">
        <title>Electrophysiological characterization of the inhibitory effect of a novel peptide gurmarin on the sweet taste response in rats.</title>
        <authorList>
            <person name="Miyasaka A."/>
            <person name="Imoto T."/>
        </authorList>
    </citation>
    <scope>FUNCTION</scope>
</reference>
<reference key="7">
    <citation type="journal article" date="1998" name="Biopolymers">
        <title>Role of hydrophobic amino acids in gurmarin, a sweetness-suppressing polypeptide.</title>
        <authorList>
            <person name="Ota M."/>
            <person name="Shimizu Y."/>
            <person name="Tonosaki K."/>
            <person name="Ariyoshi Y."/>
        </authorList>
    </citation>
    <scope>FUNCTION</scope>
    <scope>MUTAGENESIS OF 65-TYR-TYR-66 AND 80-TRP-TRP-81</scope>
</reference>
<reference key="8">
    <citation type="journal article" date="2000" name="Am. J. Physiol.">
        <title>Inhibitory effect of gurmarin on palatal taste responses to amino acids in the rat.</title>
        <authorList>
            <person name="Harada S."/>
            <person name="Kasahara Y."/>
        </authorList>
    </citation>
    <scope>FUNCTION</scope>
</reference>
<reference key="9">
    <citation type="journal article" date="2022" name="Front. Cell. Infect. Microbiol.">
        <title>Inhibition of Staphylococcus aureus biofilm formation by gurmarin, a plant-derived cyclic peptide.</title>
        <authorList>
            <person name="Chang A.W."/>
            <person name="Dowd S.E."/>
            <person name="Brackee G."/>
            <person name="Fralick J.A."/>
            <person name="Vediyappan G."/>
        </authorList>
    </citation>
    <scope>FUNCTION</scope>
</reference>
<reference key="10">
    <citation type="journal article" date="2024" name="Chem. Senses">
        <title>Novel gurmarin-like peptides from Gymnema sylvestre and their interactions with the sweet taste receptor T1R2/T1R3.</title>
        <authorList>
            <person name="Maaroufi H."/>
        </authorList>
    </citation>
    <scope>FUNCTION</scope>
</reference>
<reference key="11">
    <citation type="journal article" date="2024" name="Chem. Senses">
        <title>Correction to: Novel gurmarin-like peptides from Gymnema sylvestre and their interactions with the sweet taste receptor T1R2/T1R3.</title>
        <authorList>
            <person name="Maaroufi H."/>
        </authorList>
    </citation>
    <scope>ERRATUM OF PUBMED:38695158</scope>
</reference>
<reference evidence="19" key="12">
    <citation type="journal article" date="1995" name="J. Biomol. NMR">
        <title>Three-dimensional structure of gurmarin, a sweet taste-suppressing polypeptide.</title>
        <authorList>
            <person name="Arai K."/>
            <person name="Ishima R."/>
            <person name="Morikawa S."/>
            <person name="Miyasaka A."/>
            <person name="Imoto T."/>
            <person name="Yoshimura S."/>
            <person name="Aimoto S."/>
            <person name="Akasaka K."/>
        </authorList>
    </citation>
    <scope>STRUCTURE BY NMR OF 53-87</scope>
    <scope>PYROGLUTAMATE FORMATION AT GLN-53</scope>
</reference>
<reference evidence="18" key="13">
    <citation type="journal article" date="1999" name="Eur. J. Biochem.">
        <title>High-resolution solution structure of gurmarin, a sweet-taste-suppressing plant polypeptide.</title>
        <authorList>
            <person name="Fletcher J.I."/>
            <person name="Dingley A.J."/>
            <person name="Smith R."/>
            <person name="Connor M."/>
            <person name="Christie M.J."/>
            <person name="King G.F."/>
        </authorList>
    </citation>
    <scope>STRUCTURE BY NMR OF 53-87</scope>
    <scope>PYROGLUTAMATE FORMATION AT GLN-53</scope>
    <scope>DISULFIDE BONDS</scope>
</reference>
<reference evidence="20" key="14">
    <citation type="journal article" date="2018" name="Chem. Senses">
        <title>The Crystal Structure of Gurmarin, a Sweet Taste-Suppressing Protein: Identification of the Amino Acid Residues Essential for Inhibition.</title>
        <authorList>
            <person name="Sigoillot M."/>
            <person name="Brockhoff A."/>
            <person name="Neiers F."/>
            <person name="Poirier N."/>
            <person name="Belloir C."/>
            <person name="Legrand P."/>
            <person name="Charron C."/>
            <person name="Roblin P."/>
            <person name="Meyerhof W."/>
            <person name="Briand L."/>
        </authorList>
    </citation>
    <scope>X-RAY CRYSTALLOGRAPHY (1.45 ANGSTROMS) OF 53-87 IN COMPLEX WITH NI(2+)</scope>
    <scope>FUNCTION</scope>
    <scope>DISULFIDE BONDS</scope>
    <scope>MUTAGENESIS OF LEU-61; ILE-63; TYR-65; TYR-66; TRP-80 AND TRP-81</scope>
</reference>
<name>GUR_GYMSY</name>
<accession>P25810</accession>
<accession>A0A3S9JKY1</accession>
<accession>Q9S8D1</accession>
<keyword id="KW-0002">3D-structure</keyword>
<keyword id="KW-0929">Antimicrobial</keyword>
<keyword id="KW-0903">Direct protein sequencing</keyword>
<keyword id="KW-1015">Disulfide bond</keyword>
<keyword id="KW-0960">Knottin</keyword>
<keyword id="KW-0873">Pyrrolidone carboxylic acid</keyword>
<keyword id="KW-0716">Sensory transduction</keyword>
<keyword id="KW-0732">Signal</keyword>
<keyword id="KW-0919">Taste</keyword>
<keyword id="KW-0776">Taste-modifying protein</keyword>
<protein>
    <recommendedName>
        <fullName evidence="15">Pro-gurmarin</fullName>
    </recommendedName>
    <component>
        <recommendedName>
            <fullName evidence="15">Sweet taste-suppressing peptide gurmarin</fullName>
            <shortName evidence="14">Gur-1</shortName>
        </recommendedName>
    </component>
</protein>
<feature type="signal peptide" evidence="1">
    <location>
        <begin position="1"/>
        <end position="20"/>
    </location>
</feature>
<feature type="chain" id="PRO_0000462340" description="Pro-gurmarin" evidence="1">
    <location>
        <begin position="21"/>
        <end position="87"/>
    </location>
</feature>
<feature type="propeptide" id="PRO_0000462341" evidence="15">
    <location>
        <begin position="21"/>
        <end position="52"/>
    </location>
</feature>
<feature type="peptide" id="PRO_0000044776" description="Sweet taste-suppressing peptide gurmarin" evidence="4">
    <location>
        <begin position="53"/>
        <end position="87"/>
    </location>
</feature>
<feature type="modified residue" description="Pyrrolidone carboxylic acid" evidence="2 4 10 18 19">
    <location>
        <position position="53"/>
    </location>
</feature>
<feature type="disulfide bond" evidence="2 5 12 18 20">
    <location>
        <begin position="55"/>
        <end position="70"/>
    </location>
</feature>
<feature type="disulfide bond" evidence="2 5 12 18 20">
    <location>
        <begin position="62"/>
        <end position="75"/>
    </location>
</feature>
<feature type="disulfide bond" evidence="2 5 12 18 20">
    <location>
        <begin position="69"/>
        <end position="85"/>
    </location>
</feature>
<feature type="mutagenesis site" description="Attenuates sweet taste-response suppression properties." evidence="5">
    <original>L</original>
    <variation>A</variation>
    <location>
        <position position="61"/>
    </location>
</feature>
<feature type="mutagenesis site" description="May affect protein secretion, folding or stability." evidence="5">
    <original>I</original>
    <variation>A</variation>
    <location>
        <position position="63"/>
    </location>
</feature>
<feature type="mutagenesis site" description="Abolishes sweet taste-response suppression properties; when associated with 80-G-G-81." evidence="13">
    <original>YY</original>
    <variation>GG</variation>
    <location>
        <begin position="65"/>
        <end position="66"/>
    </location>
</feature>
<feature type="mutagenesis site" description="May affect protein secretion, folding or stability." evidence="5">
    <original>Y</original>
    <variation>A</variation>
    <location>
        <position position="65"/>
    </location>
</feature>
<feature type="mutagenesis site" description="Attenuates sweet taste-response suppression properties." evidence="5">
    <original>Y</original>
    <variation>A</variation>
    <location>
        <position position="66"/>
    </location>
</feature>
<feature type="mutagenesis site" description="Abolishes sweet taste-response suppression properties; when associated with 65-G-G-66." evidence="13">
    <original>WW</original>
    <variation>GG</variation>
    <location>
        <begin position="80"/>
        <end position="81"/>
    </location>
</feature>
<feature type="mutagenesis site" description="Attenuates sweet taste-response suppression properties." evidence="5">
    <original>W</original>
    <variation>A</variation>
    <location>
        <position position="80"/>
    </location>
</feature>
<feature type="mutagenesis site" description="Abolishes or severely attenuates sweet taste-response suppression properties." evidence="5">
    <original>W</original>
    <variation>A</variation>
    <location>
        <position position="81"/>
    </location>
</feature>
<feature type="strand" evidence="22">
    <location>
        <begin position="60"/>
        <end position="63"/>
    </location>
</feature>
<feature type="turn" evidence="22">
    <location>
        <begin position="64"/>
        <end position="66"/>
    </location>
</feature>
<feature type="strand" evidence="21">
    <location>
        <begin position="70"/>
        <end position="72"/>
    </location>
</feature>
<feature type="strand" evidence="22">
    <location>
        <begin position="74"/>
        <end position="77"/>
    </location>
</feature>
<feature type="strand" evidence="22">
    <location>
        <begin position="79"/>
        <end position="81"/>
    </location>
</feature>
<feature type="strand" evidence="22">
    <location>
        <begin position="83"/>
        <end position="86"/>
    </location>
</feature>
<proteinExistence type="evidence at protein level"/>
<comment type="function">
    <molecule>Sweet taste-suppressing peptide gurmarin</molecule>
    <text evidence="3 5 6 7 8 9 11 13 16">Peptide that strongly, but reversibly, suppresses the sweet taste-response to various sweeteners, including sugars, sweet amino acids and the artificial sweetener saccharin (PubMed:10848518, PubMed:30137256, PubMed:7733384, PubMed:7796179, PubMed:9465786). In rodents, potentially binds to a sweet taste receptor present on apical microvilli of a subset of taste bud cells (PubMed:7734180). Highly effective at blocking the sweet taste-response in rodents such as rats and mice, though mice may possess a mix of gurmarin-sensitive and -insensitive receptors (PubMed:7733384, PubMed:7796179). Has almost no effect on the sweet taste-response in humans (Probable). Inhibits Staphylococcus aureus biofilm formation without affecting bacterial viability (PubMed:36268224). May be one of at least 9 different disulfide-rich peptides produced with varying properties (PubMed:38695158).</text>
</comment>
<comment type="tissue specificity">
    <molecule>Sweet taste-suppressing peptide gurmarin</molecule>
    <text evidence="4">Expressed in leaves (at protein level).</text>
</comment>
<comment type="domain">
    <molecule>Sweet taste-suppressing peptide gurmarin</molecule>
    <text>The presence of a 'disulfide through disulfide knot' structurally defines this protein as a knottin.</text>
</comment>
<comment type="mass spectrometry">
    <molecule>Sweet taste-suppressing peptide gurmarin</molecule>
</comment>
<comment type="miscellaneous">
    <text evidence="15">Named after the term 'gurmar', meaning 'sugar destroyer' in Hindi, for its sweet taste-suppressing properties (Probable). While Gurmarin has little effect on the human sweet taste-response the Gymnema sylvestre plant also produces gymnemic acid, a mix of triterpinoid saponins, which blocks the sweet taste-response in humans and chimpnazees, but not in other mammals (Probable). Gymnema sylvestre has been used in Ayurvedic medicine for the treatment of diabetes and other illnesses (Probable).</text>
</comment>
<evidence type="ECO:0000255" key="1"/>
<evidence type="ECO:0000269" key="2">
    <source>
    </source>
</evidence>
<evidence type="ECO:0000269" key="3">
    <source>
    </source>
</evidence>
<evidence type="ECO:0000269" key="4">
    <source>
    </source>
</evidence>
<evidence type="ECO:0000269" key="5">
    <source>
    </source>
</evidence>
<evidence type="ECO:0000269" key="6">
    <source>
    </source>
</evidence>
<evidence type="ECO:0000269" key="7">
    <source>
    </source>
</evidence>
<evidence type="ECO:0000269" key="8">
    <source>
    </source>
</evidence>
<evidence type="ECO:0000269" key="9">
    <source>
    </source>
</evidence>
<evidence type="ECO:0000269" key="10">
    <source>
    </source>
</evidence>
<evidence type="ECO:0000269" key="11">
    <source>
    </source>
</evidence>
<evidence type="ECO:0000269" key="12">
    <source>
    </source>
</evidence>
<evidence type="ECO:0000269" key="13">
    <source>
    </source>
</evidence>
<evidence type="ECO:0000303" key="14">
    <source>
    </source>
</evidence>
<evidence type="ECO:0000305" key="15"/>
<evidence type="ECO:0000305" key="16">
    <source>
    </source>
</evidence>
<evidence type="ECO:0000312" key="17">
    <source>
        <dbReference type="EMBL" id="AZP54624.1"/>
    </source>
</evidence>
<evidence type="ECO:0007744" key="18">
    <source>
        <dbReference type="PDB" id="1C4E"/>
    </source>
</evidence>
<evidence type="ECO:0007744" key="19">
    <source>
        <dbReference type="PDB" id="1GUR"/>
    </source>
</evidence>
<evidence type="ECO:0007744" key="20">
    <source>
        <dbReference type="PDB" id="5OLL"/>
    </source>
</evidence>
<evidence type="ECO:0007829" key="21">
    <source>
        <dbReference type="PDB" id="1C4E"/>
    </source>
</evidence>
<evidence type="ECO:0007829" key="22">
    <source>
        <dbReference type="PDB" id="5OLL"/>
    </source>
</evidence>
<dbReference type="EMBL" id="MH142725">
    <property type="protein sequence ID" value="AZP54624.1"/>
    <property type="molecule type" value="mRNA"/>
</dbReference>
<dbReference type="PIR" id="JX0200">
    <property type="entry name" value="JX0200"/>
</dbReference>
<dbReference type="PDB" id="1C4E">
    <property type="method" value="NMR"/>
    <property type="chains" value="A=53-87"/>
</dbReference>
<dbReference type="PDB" id="1GUR">
    <property type="method" value="NMR"/>
    <property type="chains" value="A=53-87"/>
</dbReference>
<dbReference type="PDB" id="5OLL">
    <property type="method" value="X-ray"/>
    <property type="resolution" value="1.45 A"/>
    <property type="chains" value="A=53-87"/>
</dbReference>
<dbReference type="PDBsum" id="1C4E"/>
<dbReference type="PDBsum" id="1GUR"/>
<dbReference type="PDBsum" id="5OLL"/>
<dbReference type="BMRB" id="P25810"/>
<dbReference type="SMR" id="P25810"/>
<dbReference type="EvolutionaryTrace" id="P25810"/>
<dbReference type="InterPro" id="IPR009101">
    <property type="entry name" value="Gurmarin/antifun_pep"/>
</dbReference>
<dbReference type="SUPFAM" id="SSF57048">
    <property type="entry name" value="Gurmarin-like"/>
    <property type="match status" value="1"/>
</dbReference>